<evidence type="ECO:0000255" key="1">
    <source>
        <dbReference type="HAMAP-Rule" id="MF_01330"/>
    </source>
</evidence>
<evidence type="ECO:0000256" key="2">
    <source>
        <dbReference type="SAM" id="MobiDB-lite"/>
    </source>
</evidence>
<sequence>MGNQRNRVNLNPFRFWVFELREILREIKNSRYPFNSVGSFIHIFVHQERFLKLLDPRIWSVLRSQGSTGVVLFLVAVLIYRINNRNMIERKNIYLTGLLPIPTNFAGPRNETLEESFLSSNINRLIVSLLHLPKGKRLSESCFLDPKESTRVLPITKWRNWIGKRRDSSQLKGSSDQSRDHFDSIGTEDSEYHTLINQREIQQRKERSSLLDPSFLQTERTEIESDRFSKGLSGSSSKSRLFTEGEKEMNNHLPPEEIEEFLGNPTRSILSFFSDEWSELHLGSNPTERSTVDQKLLKKEQEVSFAPFRRSETKEIVNLFKTMAYLQKTVSIHPISSDPGCDMVPKDELDSEERFQEMADLFTLSITEPDLVYHKGFAFSIDSSVLDQKQFLAEARDESKKKSLLVLPPVFYQENESFYRRIRKRGVQISCGNDLEDPKPKIVVFASNNIVEAVNQYRWIRNLIQIQYSTHGYIRNVLNRFFLMNRSDRNFEYGIQRDQIGNDTLNHRTFMKYTINQHLSNLKKSQKKGSDPLILISRTERSVNRDPNAYRYKWSKGSKNFQEHLEHFVSEQKSRFQVVFDRYRSIRNRYRSIRNRYRSRINQYSSDRSEVSDKKDNRYRSRINQYSSDRSEVSDQKNLAKFRSFVFSKLLLFLSNSLPFFFVSFGNTPPIQRSEIRVSELKGPNDRLCNQFLESIGLQLVYLKKLKPFLLDDHETSQKSKLLFNKKPEGMIDSFHTRNNRGKSLDSYFSMISHDQDNWLNPVKPFHRSSLISSFYKANRLRFLNNPHDFGFFCNKRFPFYVDIKNLDFTYGQFLNILFIRNTKFSLCGDKKKHAFLERDTISSIESQVSNLFKDFPQSGDERYNFYKYFHLAMRSDPLVRRAIYSIADISGTPLTEGQRVNFERTYCQPLSDMNLSDSEGKNLYQYLNFNSNMGLIYSEKCFSSEKRKKKKPEKRKEKKPEKRKEKKPEKRKEKKPEKRKEKKPEKRKEKKPEKRKEKKPEKRKEKKQSLYLKQWVEKVQMDRALQGERVSLILSNWNLFKTYVMPFSLTSTGYNLLKLMFLDTLGSYVMPLLRSSPKFVSICYAISDPCGISWRILQKKLCLLQWNWISAISNKCFHKLLLSEESIHRNNESPSMTDLRWPNLGAFLYSILFLLFVAGHLVFSHLLFLSQDFSELQRDFARAQSLMIPSYIVELRELLDMYPAPRSFKKLFLAAREKLVNYLRWGGGRKSFLIHLFELLNITPNPIDRIAFLKNTRHLSHTSKELYSLITELGDFSSLCSGQRYRYDQIIENVNGPCCLIDDKIESWISNCDAIEDKEREFLVPFCNFTRETRIDQILLSLTHSDHLSNNDSASQMSEEPGAFYLRHLVDIHKKGLMNYECNTSCLAERRIFLAHYQTITYSPCGDNRSHFPSHGKTFSLRLPLHPSRATLVIGSIGSGRSYLVKSLATNSYVPLITVVLNKFLKNWTPQGFDIHESGVYDEYGDDAEEANDYGASFFDFLDNDSDDYEDRDSDDYDEPGASDDYEPGDMEDFVDSEMTEWLTKTNVPLVYQLLDDEIDEFYITLQFELAKAMSPCILWIPNIHDLDAKESDYLSLGLLVNHLSRDCGRRSTKNEILVIASTHIPQKVDPSLIGPDGLSTCIKTRRLLVPQQQQCLFTLSYTRGFHLENKMFHTHTNEFESTILGPSVPDLVALTNEALSISITQKKSIIDTTTIRYALHRKTWDLEADRNLSPAKEHGTLFYQVGRAFAHTVLLRNCPIDPISIYIKKNLCEAGDSSLYKWYFELGTSMKKLTILLYLLTCSAGSIAQDLLSPPGPDEQNLITSYGLVENDSDLVHGLSDIVHGLLELEGALVGSSPTEEEVEGTEEEVEGTEEEVEGTEEEVEGTEEEVEGTEDEEVEGTEEEVEGTEDEEGEGTEEEVEGTEDEEGEGTEEEVEGTEDEEGEGTEEEVEGTEEEVEGTEEEVEGTEDEEGEGTEKDSSQFDNDRVTLLLRPKPRNPLDIQRLIYQHQKYESELEEDDDDDEDVFAPQKMLEDLFSELVWSPRIWHPWDFILDCEAEIPAEEIPEEEDPLPEEALETEVAVWGEEEEGEADDEEDERLEAQQEDELLEEEDEELKEEEDELHEEEEEEEEEEEEEEEDELHEEEEEEEEEDELQENDSEFFRSETQQPQARDGFSEEEGCFRISQFMWVPGDPLSFLYKDTPFVEVLSYPEEATEISKELLRLLNPKTKRDAPKRARQRWWTKKKQDKHYELVLDRQRWLITKSSLSKSNGFFRSNTPSESYQYLSNLFLSNRRLLDQITKTFFRKKWLFPDEMKIGFMEQ</sequence>
<protein>
    <recommendedName>
        <fullName evidence="1">Protein Ycf2</fullName>
    </recommendedName>
</protein>
<dbReference type="EMBL" id="EU262889">
    <property type="protein sequence ID" value="ABW98915.1"/>
    <property type="molecule type" value="Genomic_DNA"/>
</dbReference>
<dbReference type="EMBL" id="EU262889">
    <property type="protein sequence ID" value="ABW98932.1"/>
    <property type="molecule type" value="Genomic_DNA"/>
</dbReference>
<dbReference type="GO" id="GO:0009570">
    <property type="term" value="C:chloroplast stroma"/>
    <property type="evidence" value="ECO:0007669"/>
    <property type="project" value="UniProtKB-SubCell"/>
</dbReference>
<dbReference type="GO" id="GO:0005524">
    <property type="term" value="F:ATP binding"/>
    <property type="evidence" value="ECO:0007669"/>
    <property type="project" value="UniProtKB-KW"/>
</dbReference>
<dbReference type="GO" id="GO:0016887">
    <property type="term" value="F:ATP hydrolysis activity"/>
    <property type="evidence" value="ECO:0007669"/>
    <property type="project" value="InterPro"/>
</dbReference>
<dbReference type="CDD" id="cd19505">
    <property type="entry name" value="RecA-like_Ycf2"/>
    <property type="match status" value="1"/>
</dbReference>
<dbReference type="Gene3D" id="3.40.50.300">
    <property type="entry name" value="P-loop containing nucleotide triphosphate hydrolases"/>
    <property type="match status" value="1"/>
</dbReference>
<dbReference type="HAMAP" id="MF_01330">
    <property type="entry name" value="Ycf2"/>
    <property type="match status" value="1"/>
</dbReference>
<dbReference type="InterPro" id="IPR003593">
    <property type="entry name" value="AAA+_ATPase"/>
</dbReference>
<dbReference type="InterPro" id="IPR027417">
    <property type="entry name" value="P-loop_NTPase"/>
</dbReference>
<dbReference type="InterPro" id="IPR008543">
    <property type="entry name" value="Uncharacterised_Ycf2"/>
</dbReference>
<dbReference type="InterPro" id="IPR056777">
    <property type="entry name" value="Ycf2_N"/>
</dbReference>
<dbReference type="PANTHER" id="PTHR33078:SF92">
    <property type="entry name" value="PROTEIN YCF2"/>
    <property type="match status" value="1"/>
</dbReference>
<dbReference type="PANTHER" id="PTHR33078">
    <property type="entry name" value="PROTEIN YCF2-RELATED"/>
    <property type="match status" value="1"/>
</dbReference>
<dbReference type="Pfam" id="PF05695">
    <property type="entry name" value="Ycf2"/>
    <property type="match status" value="5"/>
</dbReference>
<dbReference type="SMART" id="SM00382">
    <property type="entry name" value="AAA"/>
    <property type="match status" value="1"/>
</dbReference>
<dbReference type="SUPFAM" id="SSF52540">
    <property type="entry name" value="P-loop containing nucleoside triphosphate hydrolases"/>
    <property type="match status" value="1"/>
</dbReference>
<proteinExistence type="inferred from homology"/>
<accession>B0Z503</accession>
<gene>
    <name evidence="1" type="primary">ycf2-A</name>
</gene>
<gene>
    <name evidence="1" type="primary">ycf2-B</name>
</gene>
<comment type="function">
    <text evidence="1">Probable ATPase of unknown function. Its presence in a non-photosynthetic plant (Epifagus virginiana) and experiments in tobacco indicate that it has an essential function which is probably not related to photosynthesis.</text>
</comment>
<comment type="subcellular location">
    <subcellularLocation>
        <location evidence="1">Plastid</location>
        <location evidence="1">Chloroplast stroma</location>
    </subcellularLocation>
</comment>
<comment type="similarity">
    <text evidence="1">Belongs to the Ycf2 family.</text>
</comment>
<reference key="1">
    <citation type="journal article" date="2008" name="Nucleic Acids Res.">
        <title>The complete nucleotide sequences of the five genetically distinct plastid genomes of Oenothera, subsection Oenothera: I. Sequence evaluation and plastome evolution.</title>
        <authorList>
            <person name="Greiner S."/>
            <person name="Wang X."/>
            <person name="Rauwolf U."/>
            <person name="Silber M.V."/>
            <person name="Mayer K."/>
            <person name="Meurer J."/>
            <person name="Haberer G."/>
            <person name="Herrmann R.G."/>
        </authorList>
    </citation>
    <scope>NUCLEOTIDE SEQUENCE [LARGE SCALE GENOMIC DNA]</scope>
    <source>
        <strain>cv. Suaveolens Grado</strain>
    </source>
</reference>
<geneLocation type="chloroplast"/>
<keyword id="KW-0067">ATP-binding</keyword>
<keyword id="KW-0150">Chloroplast</keyword>
<keyword id="KW-0547">Nucleotide-binding</keyword>
<keyword id="KW-0934">Plastid</keyword>
<organism>
    <name type="scientific">Oenothera biennis</name>
    <name type="common">German evening primrose</name>
    <name type="synonym">Onagra biennis</name>
    <dbReference type="NCBI Taxonomy" id="3942"/>
    <lineage>
        <taxon>Eukaryota</taxon>
        <taxon>Viridiplantae</taxon>
        <taxon>Streptophyta</taxon>
        <taxon>Embryophyta</taxon>
        <taxon>Tracheophyta</taxon>
        <taxon>Spermatophyta</taxon>
        <taxon>Magnoliopsida</taxon>
        <taxon>eudicotyledons</taxon>
        <taxon>Gunneridae</taxon>
        <taxon>Pentapetalae</taxon>
        <taxon>rosids</taxon>
        <taxon>malvids</taxon>
        <taxon>Myrtales</taxon>
        <taxon>Onagraceae</taxon>
        <taxon>Onagroideae</taxon>
        <taxon>Onagreae</taxon>
        <taxon>Oenothera</taxon>
    </lineage>
</organism>
<name>YCF2_OENBI</name>
<feature type="chain" id="PRO_0000343784" description="Protein Ycf2">
    <location>
        <begin position="1"/>
        <end position="2325"/>
    </location>
</feature>
<feature type="region of interest" description="Disordered" evidence="2">
    <location>
        <begin position="168"/>
        <end position="189"/>
    </location>
</feature>
<feature type="region of interest" description="Disordered" evidence="2">
    <location>
        <begin position="221"/>
        <end position="251"/>
    </location>
</feature>
<feature type="region of interest" description="Disordered" evidence="2">
    <location>
        <begin position="947"/>
        <end position="1006"/>
    </location>
</feature>
<feature type="region of interest" description="Disordered" evidence="2">
    <location>
        <begin position="1510"/>
        <end position="1529"/>
    </location>
</feature>
<feature type="region of interest" description="Disordered" evidence="2">
    <location>
        <begin position="1855"/>
        <end position="1996"/>
    </location>
</feature>
<feature type="region of interest" description="Disordered" evidence="2">
    <location>
        <begin position="2063"/>
        <end position="2179"/>
    </location>
</feature>
<feature type="compositionally biased region" description="Low complexity" evidence="2">
    <location>
        <begin position="230"/>
        <end position="240"/>
    </location>
</feature>
<feature type="compositionally biased region" description="Basic and acidic residues" evidence="2">
    <location>
        <begin position="241"/>
        <end position="250"/>
    </location>
</feature>
<feature type="compositionally biased region" description="Basic and acidic residues" evidence="2">
    <location>
        <begin position="955"/>
        <end position="1004"/>
    </location>
</feature>
<feature type="compositionally biased region" description="Acidic residues" evidence="2">
    <location>
        <begin position="1861"/>
        <end position="1976"/>
    </location>
</feature>
<feature type="compositionally biased region" description="Basic and acidic residues" evidence="2">
    <location>
        <begin position="1977"/>
        <end position="1989"/>
    </location>
</feature>
<feature type="compositionally biased region" description="Acidic residues" evidence="2">
    <location>
        <begin position="2063"/>
        <end position="2080"/>
    </location>
</feature>
<feature type="compositionally biased region" description="Acidic residues" evidence="2">
    <location>
        <begin position="2087"/>
        <end position="2162"/>
    </location>
</feature>
<feature type="binding site" evidence="1">
    <location>
        <begin position="1436"/>
        <end position="1443"/>
    </location>
    <ligand>
        <name>ATP</name>
        <dbReference type="ChEBI" id="CHEBI:30616"/>
    </ligand>
</feature>